<keyword id="KW-0175">Coiled coil</keyword>
<keyword id="KW-0931">ER-Golgi transport</keyword>
<keyword id="KW-0333">Golgi apparatus</keyword>
<keyword id="KW-0597">Phosphoprotein</keyword>
<keyword id="KW-1185">Reference proteome</keyword>
<keyword id="KW-0813">Transport</keyword>
<proteinExistence type="evidence at protein level"/>
<protein>
    <recommendedName>
        <fullName>GRIP domain-containing protein RUD3</fullName>
    </recommendedName>
    <alternativeName>
        <fullName>Golgin-related protein 1</fullName>
    </alternativeName>
    <alternativeName>
        <fullName>Relieves USO1-1 transport defect protein 3</fullName>
    </alternativeName>
</protein>
<accession>Q12234</accession>
<accession>D6W2S2</accession>
<feature type="chain" id="PRO_0000268739" description="GRIP domain-containing protein RUD3">
    <location>
        <begin position="1"/>
        <end position="484"/>
    </location>
</feature>
<feature type="domain" description="GRIP" evidence="2">
    <location>
        <begin position="401"/>
        <end position="452"/>
    </location>
</feature>
<feature type="region of interest" description="Disordered" evidence="3">
    <location>
        <begin position="1"/>
        <end position="75"/>
    </location>
</feature>
<feature type="coiled-coil region" evidence="1">
    <location>
        <begin position="84"/>
        <end position="383"/>
    </location>
</feature>
<feature type="compositionally biased region" description="Basic residues" evidence="3">
    <location>
        <begin position="1"/>
        <end position="15"/>
    </location>
</feature>
<feature type="compositionally biased region" description="Basic and acidic residues" evidence="3">
    <location>
        <begin position="16"/>
        <end position="30"/>
    </location>
</feature>
<feature type="compositionally biased region" description="Basic and acidic residues" evidence="3">
    <location>
        <begin position="61"/>
        <end position="72"/>
    </location>
</feature>
<feature type="modified residue" description="Phosphoserine" evidence="11 12 13">
    <location>
        <position position="55"/>
    </location>
</feature>
<feature type="modified residue" description="Phosphoserine" evidence="12">
    <location>
        <position position="64"/>
    </location>
</feature>
<feature type="modified residue" description="Phosphoserine" evidence="10 13">
    <location>
        <position position="468"/>
    </location>
</feature>
<sequence>MGKNKKKTGKKAKSHPHVEDVDETVNKPEEIINSVNVTVPPKMSTDPEADGIVASPDDEGKDLSEGVDKQKVNDGLTVDTINPLEDKKAGDEMKELREEIERLKLELSHKKDQETPNEDFKNELANVIKERDEFKTQYDTLLSKISSMKSIFNKMKEAQKQLEEVQEQLTEYESQNLKLKKKLEATKTENSELQSTIVTLNTELENLEKEQESTEEVFLEYESRIEALEDEKHDIIEKHSKELNTYRKEKDQLNLQVQELMIILENNKQDISDLRTERDELRQALESHEKEKAVLKNSLNDLELKIEEVDNKREEEARERDQEVKSLRSQLDTEIETHNNDTEALESMKKQLEAMKEDASMKEKYEEESKQHILQIGKLRHEAIILNEHLTKALAMLKKSSDSESVDKELISNLLISFVSIPRADPRKFEVLELLSNFLNWDEDKKQQAGLISNNESKNSSAVSRTESFVSLWTNYLEKESEKD</sequence>
<evidence type="ECO:0000255" key="1"/>
<evidence type="ECO:0000255" key="2">
    <source>
        <dbReference type="PROSITE-ProRule" id="PRU00250"/>
    </source>
</evidence>
<evidence type="ECO:0000256" key="3">
    <source>
        <dbReference type="SAM" id="MobiDB-lite"/>
    </source>
</evidence>
<evidence type="ECO:0000269" key="4">
    <source>
    </source>
</evidence>
<evidence type="ECO:0000269" key="5">
    <source>
    </source>
</evidence>
<evidence type="ECO:0000269" key="6">
    <source>
    </source>
</evidence>
<evidence type="ECO:0000269" key="7">
    <source>
    </source>
</evidence>
<evidence type="ECO:0000269" key="8">
    <source>
    </source>
</evidence>
<evidence type="ECO:0000269" key="9">
    <source>
    </source>
</evidence>
<evidence type="ECO:0007744" key="10">
    <source>
    </source>
</evidence>
<evidence type="ECO:0007744" key="11">
    <source>
    </source>
</evidence>
<evidence type="ECO:0007744" key="12">
    <source>
    </source>
</evidence>
<evidence type="ECO:0007744" key="13">
    <source>
    </source>
</evidence>
<organism>
    <name type="scientific">Saccharomyces cerevisiae (strain ATCC 204508 / S288c)</name>
    <name type="common">Baker's yeast</name>
    <dbReference type="NCBI Taxonomy" id="559292"/>
    <lineage>
        <taxon>Eukaryota</taxon>
        <taxon>Fungi</taxon>
        <taxon>Dikarya</taxon>
        <taxon>Ascomycota</taxon>
        <taxon>Saccharomycotina</taxon>
        <taxon>Saccharomycetes</taxon>
        <taxon>Saccharomycetales</taxon>
        <taxon>Saccharomycetaceae</taxon>
        <taxon>Saccharomyces</taxon>
    </lineage>
</organism>
<dbReference type="EMBL" id="X92441">
    <property type="protein sequence ID" value="CAA63179.1"/>
    <property type="molecule type" value="Genomic_DNA"/>
</dbReference>
<dbReference type="EMBL" id="Z75124">
    <property type="protein sequence ID" value="CAA99433.1"/>
    <property type="molecule type" value="Genomic_DNA"/>
</dbReference>
<dbReference type="EMBL" id="BK006948">
    <property type="protein sequence ID" value="DAA10988.1"/>
    <property type="molecule type" value="Genomic_DNA"/>
</dbReference>
<dbReference type="PIR" id="S60943">
    <property type="entry name" value="S60943"/>
</dbReference>
<dbReference type="RefSeq" id="NP_014859.3">
    <property type="nucleotide sequence ID" value="NM_001183635.3"/>
</dbReference>
<dbReference type="SMR" id="Q12234"/>
<dbReference type="BioGRID" id="34611">
    <property type="interactions" value="553"/>
</dbReference>
<dbReference type="FunCoup" id="Q12234">
    <property type="interactions" value="57"/>
</dbReference>
<dbReference type="IntAct" id="Q12234">
    <property type="interactions" value="3"/>
</dbReference>
<dbReference type="MINT" id="Q12234"/>
<dbReference type="STRING" id="4932.YOR216C"/>
<dbReference type="iPTMnet" id="Q12234"/>
<dbReference type="PaxDb" id="4932-YOR216C"/>
<dbReference type="PeptideAtlas" id="Q12234"/>
<dbReference type="EnsemblFungi" id="YOR216C_mRNA">
    <property type="protein sequence ID" value="YOR216C"/>
    <property type="gene ID" value="YOR216C"/>
</dbReference>
<dbReference type="GeneID" id="854391"/>
<dbReference type="KEGG" id="sce:YOR216C"/>
<dbReference type="AGR" id="SGD:S000005742"/>
<dbReference type="SGD" id="S000005742">
    <property type="gene designation" value="RUD3"/>
</dbReference>
<dbReference type="VEuPathDB" id="FungiDB:YOR216C"/>
<dbReference type="eggNOG" id="ENOG502RYXN">
    <property type="taxonomic scope" value="Eukaryota"/>
</dbReference>
<dbReference type="HOGENOM" id="CLU_020680_3_1_1"/>
<dbReference type="InParanoid" id="Q12234"/>
<dbReference type="OMA" id="QAMHNWE"/>
<dbReference type="OrthoDB" id="425925at2759"/>
<dbReference type="BioCyc" id="YEAST:G3O-33718-MONOMER"/>
<dbReference type="BioGRID-ORCS" id="854391">
    <property type="hits" value="6 hits in 10 CRISPR screens"/>
</dbReference>
<dbReference type="PRO" id="PR:Q12234"/>
<dbReference type="Proteomes" id="UP000002311">
    <property type="component" value="Chromosome XV"/>
</dbReference>
<dbReference type="RNAct" id="Q12234">
    <property type="molecule type" value="protein"/>
</dbReference>
<dbReference type="GO" id="GO:0005794">
    <property type="term" value="C:Golgi apparatus"/>
    <property type="evidence" value="ECO:0007005"/>
    <property type="project" value="SGD"/>
</dbReference>
<dbReference type="GO" id="GO:0005796">
    <property type="term" value="C:Golgi lumen"/>
    <property type="evidence" value="ECO:0007669"/>
    <property type="project" value="UniProtKB-SubCell"/>
</dbReference>
<dbReference type="GO" id="GO:0000139">
    <property type="term" value="C:Golgi membrane"/>
    <property type="evidence" value="ECO:0000314"/>
    <property type="project" value="SGD"/>
</dbReference>
<dbReference type="GO" id="GO:0051020">
    <property type="term" value="F:GTPase binding"/>
    <property type="evidence" value="ECO:0000314"/>
    <property type="project" value="SGD"/>
</dbReference>
<dbReference type="GO" id="GO:0031267">
    <property type="term" value="F:small GTPase binding"/>
    <property type="evidence" value="ECO:0000318"/>
    <property type="project" value="GO_Central"/>
</dbReference>
<dbReference type="GO" id="GO:0006888">
    <property type="term" value="P:endoplasmic reticulum to Golgi vesicle-mediated transport"/>
    <property type="evidence" value="ECO:0000316"/>
    <property type="project" value="SGD"/>
</dbReference>
<dbReference type="GO" id="GO:0007030">
    <property type="term" value="P:Golgi organization"/>
    <property type="evidence" value="ECO:0000318"/>
    <property type="project" value="GO_Central"/>
</dbReference>
<dbReference type="Gene3D" id="1.10.287.1490">
    <property type="match status" value="1"/>
</dbReference>
<dbReference type="InterPro" id="IPR019459">
    <property type="entry name" value="GRAB"/>
</dbReference>
<dbReference type="InterPro" id="IPR000237">
    <property type="entry name" value="GRIP_dom"/>
</dbReference>
<dbReference type="PANTHER" id="PTHR18921">
    <property type="entry name" value="MYOSIN HEAVY CHAIN - RELATED"/>
    <property type="match status" value="1"/>
</dbReference>
<dbReference type="PANTHER" id="PTHR18921:SF2">
    <property type="entry name" value="THYROID RECEPTOR-INTERACTING PROTEIN 11"/>
    <property type="match status" value="1"/>
</dbReference>
<dbReference type="Pfam" id="PF10375">
    <property type="entry name" value="GRAB"/>
    <property type="match status" value="1"/>
</dbReference>
<dbReference type="PROSITE" id="PS50913">
    <property type="entry name" value="GRIP"/>
    <property type="match status" value="1"/>
</dbReference>
<comment type="function">
    <text evidence="4 5 6 9">Involved in the structural organization of the cis-Golgi and in vesicle targeting/fusion stages of ER to Golgi transport.</text>
</comment>
<comment type="interaction">
    <interactant intactId="EBI-31697">
        <id>Q12234</id>
    </interactant>
    <interactant intactId="EBI-2816">
        <id>P11076</id>
        <label>ARF1</label>
    </interactant>
    <organismsDiffer>false</organismsDiffer>
    <experiments>5</experiments>
</comment>
<comment type="subcellular location">
    <subcellularLocation>
        <location evidence="6 7 9">Golgi apparatus lumen</location>
    </subcellularLocation>
    <text>The Golgi localization needs the presence of ARF1 and ERV14.</text>
</comment>
<comment type="domain">
    <text>The GRIP domain binds to ARF1, which leads to the Golgi localization of RUD3.</text>
</comment>
<comment type="miscellaneous">
    <text evidence="8">Present with 7620 molecules/cell in log phase SD medium.</text>
</comment>
<reference key="1">
    <citation type="journal article" date="1996" name="Yeast">
        <title>Sequence and analysis of a 33 kb fragment from the right arm of chromosome XV of the yeast Saccharomyces cerevisiae.</title>
        <authorList>
            <person name="Galisson F."/>
            <person name="Dujon B."/>
        </authorList>
    </citation>
    <scope>NUCLEOTIDE SEQUENCE [GENOMIC DNA]</scope>
    <source>
        <strain>ATCC 96604 / S288c / FY1679</strain>
    </source>
</reference>
<reference key="2">
    <citation type="journal article" date="1997" name="Nature">
        <title>The nucleotide sequence of Saccharomyces cerevisiae chromosome XV.</title>
        <authorList>
            <person name="Dujon B."/>
            <person name="Albermann K."/>
            <person name="Aldea M."/>
            <person name="Alexandraki D."/>
            <person name="Ansorge W."/>
            <person name="Arino J."/>
            <person name="Benes V."/>
            <person name="Bohn C."/>
            <person name="Bolotin-Fukuhara M."/>
            <person name="Bordonne R."/>
            <person name="Boyer J."/>
            <person name="Camasses A."/>
            <person name="Casamayor A."/>
            <person name="Casas C."/>
            <person name="Cheret G."/>
            <person name="Cziepluch C."/>
            <person name="Daignan-Fornier B."/>
            <person name="Dang V.-D."/>
            <person name="de Haan M."/>
            <person name="Delius H."/>
            <person name="Durand P."/>
            <person name="Fairhead C."/>
            <person name="Feldmann H."/>
            <person name="Gaillon L."/>
            <person name="Galisson F."/>
            <person name="Gamo F.-J."/>
            <person name="Gancedo C."/>
            <person name="Goffeau A."/>
            <person name="Goulding S.E."/>
            <person name="Grivell L.A."/>
            <person name="Habbig B."/>
            <person name="Hand N.J."/>
            <person name="Hani J."/>
            <person name="Hattenhorst U."/>
            <person name="Hebling U."/>
            <person name="Hernando Y."/>
            <person name="Herrero E."/>
            <person name="Heumann K."/>
            <person name="Hiesel R."/>
            <person name="Hilger F."/>
            <person name="Hofmann B."/>
            <person name="Hollenberg C.P."/>
            <person name="Hughes B."/>
            <person name="Jauniaux J.-C."/>
            <person name="Kalogeropoulos A."/>
            <person name="Katsoulou C."/>
            <person name="Kordes E."/>
            <person name="Lafuente M.J."/>
            <person name="Landt O."/>
            <person name="Louis E.J."/>
            <person name="Maarse A.C."/>
            <person name="Madania A."/>
            <person name="Mannhaupt G."/>
            <person name="Marck C."/>
            <person name="Martin R.P."/>
            <person name="Mewes H.-W."/>
            <person name="Michaux G."/>
            <person name="Paces V."/>
            <person name="Parle-McDermott A.G."/>
            <person name="Pearson B.M."/>
            <person name="Perrin A."/>
            <person name="Pettersson B."/>
            <person name="Poch O."/>
            <person name="Pohl T.M."/>
            <person name="Poirey R."/>
            <person name="Portetelle D."/>
            <person name="Pujol A."/>
            <person name="Purnelle B."/>
            <person name="Ramezani Rad M."/>
            <person name="Rechmann S."/>
            <person name="Schwager C."/>
            <person name="Schweizer M."/>
            <person name="Sor F."/>
            <person name="Sterky F."/>
            <person name="Tarassov I.A."/>
            <person name="Teodoru C."/>
            <person name="Tettelin H."/>
            <person name="Thierry A."/>
            <person name="Tobiasch E."/>
            <person name="Tzermia M."/>
            <person name="Uhlen M."/>
            <person name="Unseld M."/>
            <person name="Valens M."/>
            <person name="Vandenbol M."/>
            <person name="Vetter I."/>
            <person name="Vlcek C."/>
            <person name="Voet M."/>
            <person name="Volckaert G."/>
            <person name="Voss H."/>
            <person name="Wambutt R."/>
            <person name="Wedler H."/>
            <person name="Wiemann S."/>
            <person name="Winsor B."/>
            <person name="Wolfe K.H."/>
            <person name="Zollner A."/>
            <person name="Zumstein E."/>
            <person name="Kleine K."/>
        </authorList>
    </citation>
    <scope>NUCLEOTIDE SEQUENCE [LARGE SCALE GENOMIC DNA]</scope>
    <source>
        <strain>ATCC 204508 / S288c</strain>
    </source>
</reference>
<reference key="3">
    <citation type="journal article" date="2014" name="G3 (Bethesda)">
        <title>The reference genome sequence of Saccharomyces cerevisiae: Then and now.</title>
        <authorList>
            <person name="Engel S.R."/>
            <person name="Dietrich F.S."/>
            <person name="Fisk D.G."/>
            <person name="Binkley G."/>
            <person name="Balakrishnan R."/>
            <person name="Costanzo M.C."/>
            <person name="Dwight S.S."/>
            <person name="Hitz B.C."/>
            <person name="Karra K."/>
            <person name="Nash R.S."/>
            <person name="Weng S."/>
            <person name="Wong E.D."/>
            <person name="Lloyd P."/>
            <person name="Skrzypek M.S."/>
            <person name="Miyasato S.R."/>
            <person name="Simison M."/>
            <person name="Cherry J.M."/>
        </authorList>
    </citation>
    <scope>GENOME REANNOTATION</scope>
    <source>
        <strain>ATCC 204508 / S288c</strain>
    </source>
</reference>
<reference key="4">
    <citation type="journal article" date="1999" name="J. Cell Biol.">
        <title>Sec34p, a protein required for vesicle tethering to the yeast Golgi apparatus, is in a complex with Sec35p.</title>
        <authorList>
            <person name="VanRheenen S.M."/>
            <person name="Cao X."/>
            <person name="Sapperstein S.K."/>
            <person name="Chiang E.C."/>
            <person name="Lupashin V.V."/>
            <person name="Barlowe C."/>
            <person name="Waters M.G."/>
        </authorList>
    </citation>
    <scope>FUNCTION</scope>
</reference>
<reference key="5">
    <citation type="journal article" date="1999" name="Mol. Biol. Cell">
        <title>High-copy suppressor analysis reveals a physical interaction between Sec34p and Sec35p, a protein implicated in vesicle docking.</title>
        <authorList>
            <person name="Kim D.-W."/>
            <person name="Sacher M."/>
            <person name="Scarpa A."/>
            <person name="Quinn A.M."/>
            <person name="Ferro-Novick S."/>
        </authorList>
    </citation>
    <scope>FUNCTION</scope>
</reference>
<reference key="6">
    <citation type="journal article" date="2003" name="Biochem. Biophys. Res. Commun.">
        <title>Characterization of Grp1p, a novel cis-Golgi matrix protein.</title>
        <authorList>
            <person name="Kim D.-W."/>
        </authorList>
    </citation>
    <scope>FUNCTION</scope>
    <scope>SUBCELLULAR LOCATION</scope>
</reference>
<reference key="7">
    <citation type="journal article" date="2003" name="Nature">
        <title>Global analysis of protein localization in budding yeast.</title>
        <authorList>
            <person name="Huh W.-K."/>
            <person name="Falvo J.V."/>
            <person name="Gerke L.C."/>
            <person name="Carroll A.S."/>
            <person name="Howson R.W."/>
            <person name="Weissman J.S."/>
            <person name="O'Shea E.K."/>
        </authorList>
    </citation>
    <scope>SUBCELLULAR LOCATION [LARGE SCALE ANALYSIS]</scope>
</reference>
<reference key="8">
    <citation type="journal article" date="2003" name="Nature">
        <title>Global analysis of protein expression in yeast.</title>
        <authorList>
            <person name="Ghaemmaghami S."/>
            <person name="Huh W.-K."/>
            <person name="Bower K."/>
            <person name="Howson R.W."/>
            <person name="Belle A."/>
            <person name="Dephoure N."/>
            <person name="O'Shea E.K."/>
            <person name="Weissman J.S."/>
        </authorList>
    </citation>
    <scope>LEVEL OF PROTEIN EXPRESSION [LARGE SCALE ANALYSIS]</scope>
</reference>
<reference key="9">
    <citation type="journal article" date="2004" name="J. Cell Biol.">
        <title>The GTPase Arf1p and the ER to Golgi cargo receptor Erv14p cooperate to recruit the golgin Rud3p to the cis-Golgi.</title>
        <authorList>
            <person name="Gillingham A.K."/>
            <person name="Tong A.H.Y."/>
            <person name="Boone C."/>
            <person name="Munro S."/>
        </authorList>
    </citation>
    <scope>FUNCTION</scope>
    <scope>SUBCELLULAR LOCATION</scope>
    <scope>INTERACTION WITH ARF1 AND ARF3</scope>
</reference>
<reference key="10">
    <citation type="journal article" date="2005" name="Mol. Cell. Proteomics">
        <title>Quantitative phosphoproteomics applied to the yeast pheromone signaling pathway.</title>
        <authorList>
            <person name="Gruhler A."/>
            <person name="Olsen J.V."/>
            <person name="Mohammed S."/>
            <person name="Mortensen P."/>
            <person name="Faergeman N.J."/>
            <person name="Mann M."/>
            <person name="Jensen O.N."/>
        </authorList>
    </citation>
    <scope>PHOSPHORYLATION [LARGE SCALE ANALYSIS] AT SER-468</scope>
    <scope>IDENTIFICATION BY MASS SPECTROMETRY [LARGE SCALE ANALYSIS]</scope>
    <source>
        <strain>YAL6B</strain>
    </source>
</reference>
<reference key="11">
    <citation type="journal article" date="2007" name="J. Proteome Res.">
        <title>Large-scale phosphorylation analysis of alpha-factor-arrested Saccharomyces cerevisiae.</title>
        <authorList>
            <person name="Li X."/>
            <person name="Gerber S.A."/>
            <person name="Rudner A.D."/>
            <person name="Beausoleil S.A."/>
            <person name="Haas W."/>
            <person name="Villen J."/>
            <person name="Elias J.E."/>
            <person name="Gygi S.P."/>
        </authorList>
    </citation>
    <scope>PHOSPHORYLATION [LARGE SCALE ANALYSIS] AT SER-55</scope>
    <scope>IDENTIFICATION BY MASS SPECTROMETRY [LARGE SCALE ANALYSIS]</scope>
    <source>
        <strain>ADR376</strain>
    </source>
</reference>
<reference key="12">
    <citation type="journal article" date="2008" name="Mol. Cell. Proteomics">
        <title>A multidimensional chromatography technology for in-depth phosphoproteome analysis.</title>
        <authorList>
            <person name="Albuquerque C.P."/>
            <person name="Smolka M.B."/>
            <person name="Payne S.H."/>
            <person name="Bafna V."/>
            <person name="Eng J."/>
            <person name="Zhou H."/>
        </authorList>
    </citation>
    <scope>PHOSPHORYLATION [LARGE SCALE ANALYSIS] AT SER-55 AND SER-64</scope>
    <scope>IDENTIFICATION BY MASS SPECTROMETRY [LARGE SCALE ANALYSIS]</scope>
</reference>
<reference key="13">
    <citation type="journal article" date="2009" name="Science">
        <title>Global analysis of Cdk1 substrate phosphorylation sites provides insights into evolution.</title>
        <authorList>
            <person name="Holt L.J."/>
            <person name="Tuch B.B."/>
            <person name="Villen J."/>
            <person name="Johnson A.D."/>
            <person name="Gygi S.P."/>
            <person name="Morgan D.O."/>
        </authorList>
    </citation>
    <scope>PHOSPHORYLATION [LARGE SCALE ANALYSIS] AT SER-55 AND SER-468</scope>
    <scope>IDENTIFICATION BY MASS SPECTROMETRY [LARGE SCALE ANALYSIS]</scope>
</reference>
<gene>
    <name type="primary">RUD3</name>
    <name type="synonym">GRP1</name>
    <name type="ordered locus">YOR216C</name>
    <name type="ORF">YOR50-6</name>
</gene>
<name>RUD3_YEAST</name>